<comment type="function">
    <text evidence="1">Probably deamidates glutamine residues to glutamate on methyl-accepting chemotaxis receptors (MCPs), playing an important role in chemotaxis.</text>
</comment>
<comment type="catalytic activity">
    <reaction evidence="1">
        <text>L-glutaminyl-[protein] + H2O = L-glutamyl-[protein] + NH4(+)</text>
        <dbReference type="Rhea" id="RHEA:16441"/>
        <dbReference type="Rhea" id="RHEA-COMP:10207"/>
        <dbReference type="Rhea" id="RHEA-COMP:10208"/>
        <dbReference type="ChEBI" id="CHEBI:15377"/>
        <dbReference type="ChEBI" id="CHEBI:28938"/>
        <dbReference type="ChEBI" id="CHEBI:29973"/>
        <dbReference type="ChEBI" id="CHEBI:30011"/>
        <dbReference type="EC" id="3.5.1.44"/>
    </reaction>
</comment>
<comment type="similarity">
    <text evidence="1">Belongs to the CheD family.</text>
</comment>
<reference key="1">
    <citation type="submission" date="2007-04" db="EMBL/GenBank/DDBJ databases">
        <title>Complete sequence of chromosome of Rhodobacter sphaeroides ATCC 17025.</title>
        <authorList>
            <consortium name="US DOE Joint Genome Institute"/>
            <person name="Copeland A."/>
            <person name="Lucas S."/>
            <person name="Lapidus A."/>
            <person name="Barry K."/>
            <person name="Detter J.C."/>
            <person name="Glavina del Rio T."/>
            <person name="Hammon N."/>
            <person name="Israni S."/>
            <person name="Dalin E."/>
            <person name="Tice H."/>
            <person name="Pitluck S."/>
            <person name="Chertkov O."/>
            <person name="Brettin T."/>
            <person name="Bruce D."/>
            <person name="Han C."/>
            <person name="Schmutz J."/>
            <person name="Larimer F."/>
            <person name="Land M."/>
            <person name="Hauser L."/>
            <person name="Kyrpides N."/>
            <person name="Kim E."/>
            <person name="Richardson P."/>
            <person name="Mackenzie C."/>
            <person name="Choudhary M."/>
            <person name="Donohue T.J."/>
            <person name="Kaplan S."/>
        </authorList>
    </citation>
    <scope>NUCLEOTIDE SEQUENCE [LARGE SCALE GENOMIC DNA]</scope>
    <source>
        <strain>ATCC 17025 / ATH 2.4.3</strain>
    </source>
</reference>
<dbReference type="EC" id="3.5.1.44" evidence="1"/>
<dbReference type="EMBL" id="CP000661">
    <property type="protein sequence ID" value="ABP70684.1"/>
    <property type="molecule type" value="Genomic_DNA"/>
</dbReference>
<dbReference type="SMR" id="A4WTH0"/>
<dbReference type="STRING" id="349102.Rsph17025_1791"/>
<dbReference type="KEGG" id="rsq:Rsph17025_1791"/>
<dbReference type="eggNOG" id="COG1871">
    <property type="taxonomic scope" value="Bacteria"/>
</dbReference>
<dbReference type="HOGENOM" id="CLU_087854_0_1_5"/>
<dbReference type="BioCyc" id="RSPH349102:G1G8M-1847-MONOMER"/>
<dbReference type="GO" id="GO:0050568">
    <property type="term" value="F:protein-glutamine glutaminase activity"/>
    <property type="evidence" value="ECO:0007669"/>
    <property type="project" value="UniProtKB-UniRule"/>
</dbReference>
<dbReference type="GO" id="GO:0006935">
    <property type="term" value="P:chemotaxis"/>
    <property type="evidence" value="ECO:0007669"/>
    <property type="project" value="UniProtKB-UniRule"/>
</dbReference>
<dbReference type="CDD" id="cd16352">
    <property type="entry name" value="CheD"/>
    <property type="match status" value="1"/>
</dbReference>
<dbReference type="Gene3D" id="3.30.1330.200">
    <property type="match status" value="1"/>
</dbReference>
<dbReference type="HAMAP" id="MF_01440">
    <property type="entry name" value="CheD"/>
    <property type="match status" value="1"/>
</dbReference>
<dbReference type="InterPro" id="IPR038592">
    <property type="entry name" value="CheD-like_sf"/>
</dbReference>
<dbReference type="InterPro" id="IPR005659">
    <property type="entry name" value="Chemorcpt_Glu_NH3ase_CheD"/>
</dbReference>
<dbReference type="InterPro" id="IPR011324">
    <property type="entry name" value="Cytotoxic_necrot_fac-like_cat"/>
</dbReference>
<dbReference type="PANTHER" id="PTHR35147">
    <property type="entry name" value="CHEMORECEPTOR GLUTAMINE DEAMIDASE CHED-RELATED"/>
    <property type="match status" value="1"/>
</dbReference>
<dbReference type="PANTHER" id="PTHR35147:SF2">
    <property type="entry name" value="CHEMORECEPTOR GLUTAMINE DEAMIDASE CHED-RELATED"/>
    <property type="match status" value="1"/>
</dbReference>
<dbReference type="Pfam" id="PF03975">
    <property type="entry name" value="CheD"/>
    <property type="match status" value="1"/>
</dbReference>
<dbReference type="SUPFAM" id="SSF64438">
    <property type="entry name" value="CNF1/YfiH-like putative cysteine hydrolases"/>
    <property type="match status" value="1"/>
</dbReference>
<organism>
    <name type="scientific">Cereibacter sphaeroides (strain ATCC 17025 / ATH 2.4.3)</name>
    <name type="common">Rhodobacter sphaeroides</name>
    <dbReference type="NCBI Taxonomy" id="349102"/>
    <lineage>
        <taxon>Bacteria</taxon>
        <taxon>Pseudomonadati</taxon>
        <taxon>Pseudomonadota</taxon>
        <taxon>Alphaproteobacteria</taxon>
        <taxon>Rhodobacterales</taxon>
        <taxon>Paracoccaceae</taxon>
        <taxon>Cereibacter</taxon>
    </lineage>
</organism>
<name>CHED_CERS5</name>
<proteinExistence type="inferred from homology"/>
<protein>
    <recommendedName>
        <fullName evidence="1">Probable chemoreceptor glutamine deamidase CheD</fullName>
        <ecNumber evidence="1">3.5.1.44</ecNumber>
    </recommendedName>
</protein>
<evidence type="ECO:0000255" key="1">
    <source>
        <dbReference type="HAMAP-Rule" id="MF_01440"/>
    </source>
</evidence>
<feature type="chain" id="PRO_1000068559" description="Probable chemoreceptor glutamine deamidase CheD">
    <location>
        <begin position="1"/>
        <end position="199"/>
    </location>
</feature>
<keyword id="KW-0145">Chemotaxis</keyword>
<keyword id="KW-0378">Hydrolase</keyword>
<gene>
    <name evidence="1" type="primary">cheD</name>
    <name type="ordered locus">Rsph17025_1791</name>
</gene>
<sequence length="199" mass="21890">MLDRETSRDDVAVQTIHVMQGAYVASDDPNIVYTTILGSCVCTCMCDPIARVGGINHFLLPYAGVTKVENLRYGYHAIEILINSLLKLGANRHRLEAKLFGGGSMTLQLGAVGPANAVFAQKYLRDESINCVARSLGGTRARKIRFHPTSGRVQQMFLTEIEQLPPESPRVRLRRGAGEVTYFDCDANSDPAAFGKEMR</sequence>
<accession>A4WTH0</accession>